<feature type="chain" id="PRO_1000120271" description="GMP synthase [glutamine-hydrolyzing]">
    <location>
        <begin position="1"/>
        <end position="542"/>
    </location>
</feature>
<feature type="domain" description="Glutamine amidotransferase type-1" evidence="1">
    <location>
        <begin position="28"/>
        <end position="218"/>
    </location>
</feature>
<feature type="domain" description="GMPS ATP-PPase" evidence="1">
    <location>
        <begin position="219"/>
        <end position="417"/>
    </location>
</feature>
<feature type="active site" description="Nucleophile" evidence="1">
    <location>
        <position position="105"/>
    </location>
</feature>
<feature type="active site" evidence="1">
    <location>
        <position position="192"/>
    </location>
</feature>
<feature type="active site" evidence="1">
    <location>
        <position position="194"/>
    </location>
</feature>
<feature type="binding site" evidence="1">
    <location>
        <begin position="246"/>
        <end position="252"/>
    </location>
    <ligand>
        <name>ATP</name>
        <dbReference type="ChEBI" id="CHEBI:30616"/>
    </ligand>
</feature>
<reference key="1">
    <citation type="journal article" date="2011" name="MBio">
        <title>Novel metabolic attributes of the genus Cyanothece, comprising a group of unicellular nitrogen-fixing Cyanobacteria.</title>
        <authorList>
            <person name="Bandyopadhyay A."/>
            <person name="Elvitigala T."/>
            <person name="Welsh E."/>
            <person name="Stockel J."/>
            <person name="Liberton M."/>
            <person name="Min H."/>
            <person name="Sherman L.A."/>
            <person name="Pakrasi H.B."/>
        </authorList>
    </citation>
    <scope>NUCLEOTIDE SEQUENCE [LARGE SCALE GENOMIC DNA]</scope>
    <source>
        <strain>PCC 7424</strain>
    </source>
</reference>
<evidence type="ECO:0000255" key="1">
    <source>
        <dbReference type="HAMAP-Rule" id="MF_00344"/>
    </source>
</evidence>
<accession>B7K8T7</accession>
<organism>
    <name type="scientific">Gloeothece citriformis (strain PCC 7424)</name>
    <name type="common">Cyanothece sp. (strain PCC 7424)</name>
    <dbReference type="NCBI Taxonomy" id="65393"/>
    <lineage>
        <taxon>Bacteria</taxon>
        <taxon>Bacillati</taxon>
        <taxon>Cyanobacteriota</taxon>
        <taxon>Cyanophyceae</taxon>
        <taxon>Oscillatoriophycideae</taxon>
        <taxon>Chroococcales</taxon>
        <taxon>Aphanothecaceae</taxon>
        <taxon>Gloeothece</taxon>
        <taxon>Gloeothece citriformis</taxon>
    </lineage>
</organism>
<proteinExistence type="inferred from homology"/>
<comment type="function">
    <text evidence="1">Catalyzes the synthesis of GMP from XMP.</text>
</comment>
<comment type="catalytic activity">
    <reaction evidence="1">
        <text>XMP + L-glutamine + ATP + H2O = GMP + L-glutamate + AMP + diphosphate + 2 H(+)</text>
        <dbReference type="Rhea" id="RHEA:11680"/>
        <dbReference type="ChEBI" id="CHEBI:15377"/>
        <dbReference type="ChEBI" id="CHEBI:15378"/>
        <dbReference type="ChEBI" id="CHEBI:29985"/>
        <dbReference type="ChEBI" id="CHEBI:30616"/>
        <dbReference type="ChEBI" id="CHEBI:33019"/>
        <dbReference type="ChEBI" id="CHEBI:57464"/>
        <dbReference type="ChEBI" id="CHEBI:58115"/>
        <dbReference type="ChEBI" id="CHEBI:58359"/>
        <dbReference type="ChEBI" id="CHEBI:456215"/>
        <dbReference type="EC" id="6.3.5.2"/>
    </reaction>
</comment>
<comment type="pathway">
    <text evidence="1">Purine metabolism; GMP biosynthesis; GMP from XMP (L-Gln route): step 1/1.</text>
</comment>
<comment type="subunit">
    <text evidence="1">Homodimer.</text>
</comment>
<name>GUAA_GLOC7</name>
<gene>
    <name evidence="1" type="primary">guaA</name>
    <name type="ordered locus">PCC7424_2880</name>
</gene>
<sequence>MATQIPSKPSTSETVPTESLKERINRQMIVILDFGSQYSELIARRIRETNVYSEVLSYRTSAEQLRQLAPKGIILSGGPNSVYDKNAPQCTQEIWDLGIPILGVCYGMQLMVQQLGGKVERAKRAEYGKASLHIDDPTDLLTNVEDNSIAWMSHGDSCIELPDGFKILAHTDNTPCAAIANHEQKLFGVQFHPEVVHSVGGIALIRNFVYHICECEPTWTTEAFVEEAIREIRAKIGDKRVLLALSGGVDSSTLAFLLHRAIGDQLTCMFIDQGFMRKGEPERLMEIFDHQFHIPVVYVNSREQFLEQLKGVTDPEEKRRLIGHEFIKVFEEESNRLGPFDYLAQGTLYPDVIESADSNVDPQTGERVAVKIKSHHNVGGLPKNLRFKLVEPLRKLFKDEVRKVARSIGLPEEIVRRHPFPGPGLAIRIIGEVTSERLKILRDADFVVRDEISKQGMYHDFWQAFAVLLPVRSVGVMGDQRTYAHPVVLRLITSEDGMTADWAKVPYDLLEIISNRIVNEVRGVNRVVYDITSKPPGTIEWE</sequence>
<protein>
    <recommendedName>
        <fullName evidence="1">GMP synthase [glutamine-hydrolyzing]</fullName>
        <ecNumber evidence="1">6.3.5.2</ecNumber>
    </recommendedName>
    <alternativeName>
        <fullName evidence="1">GMP synthetase</fullName>
    </alternativeName>
    <alternativeName>
        <fullName evidence="1">Glutamine amidotransferase</fullName>
    </alternativeName>
</protein>
<dbReference type="EC" id="6.3.5.2" evidence="1"/>
<dbReference type="EMBL" id="CP001291">
    <property type="protein sequence ID" value="ACK71285.1"/>
    <property type="molecule type" value="Genomic_DNA"/>
</dbReference>
<dbReference type="RefSeq" id="WP_015954885.1">
    <property type="nucleotide sequence ID" value="NC_011729.1"/>
</dbReference>
<dbReference type="SMR" id="B7K8T7"/>
<dbReference type="STRING" id="65393.PCC7424_2880"/>
<dbReference type="MEROPS" id="C26.957"/>
<dbReference type="KEGG" id="cyc:PCC7424_2880"/>
<dbReference type="eggNOG" id="COG0518">
    <property type="taxonomic scope" value="Bacteria"/>
</dbReference>
<dbReference type="eggNOG" id="COG0519">
    <property type="taxonomic scope" value="Bacteria"/>
</dbReference>
<dbReference type="HOGENOM" id="CLU_014340_0_5_3"/>
<dbReference type="OrthoDB" id="9802219at2"/>
<dbReference type="UniPathway" id="UPA00189">
    <property type="reaction ID" value="UER00296"/>
</dbReference>
<dbReference type="Proteomes" id="UP000002384">
    <property type="component" value="Chromosome"/>
</dbReference>
<dbReference type="GO" id="GO:0005829">
    <property type="term" value="C:cytosol"/>
    <property type="evidence" value="ECO:0007669"/>
    <property type="project" value="TreeGrafter"/>
</dbReference>
<dbReference type="GO" id="GO:0005524">
    <property type="term" value="F:ATP binding"/>
    <property type="evidence" value="ECO:0007669"/>
    <property type="project" value="UniProtKB-UniRule"/>
</dbReference>
<dbReference type="GO" id="GO:0003921">
    <property type="term" value="F:GMP synthase activity"/>
    <property type="evidence" value="ECO:0007669"/>
    <property type="project" value="InterPro"/>
</dbReference>
<dbReference type="CDD" id="cd01742">
    <property type="entry name" value="GATase1_GMP_Synthase"/>
    <property type="match status" value="1"/>
</dbReference>
<dbReference type="CDD" id="cd01997">
    <property type="entry name" value="GMP_synthase_C"/>
    <property type="match status" value="1"/>
</dbReference>
<dbReference type="FunFam" id="3.30.300.10:FF:000002">
    <property type="entry name" value="GMP synthase [glutamine-hydrolyzing]"/>
    <property type="match status" value="1"/>
</dbReference>
<dbReference type="FunFam" id="3.40.50.620:FF:000001">
    <property type="entry name" value="GMP synthase [glutamine-hydrolyzing]"/>
    <property type="match status" value="1"/>
</dbReference>
<dbReference type="FunFam" id="3.40.50.880:FF:000001">
    <property type="entry name" value="GMP synthase [glutamine-hydrolyzing]"/>
    <property type="match status" value="1"/>
</dbReference>
<dbReference type="Gene3D" id="3.30.300.10">
    <property type="match status" value="1"/>
</dbReference>
<dbReference type="Gene3D" id="3.40.50.880">
    <property type="match status" value="1"/>
</dbReference>
<dbReference type="Gene3D" id="3.40.50.620">
    <property type="entry name" value="HUPs"/>
    <property type="match status" value="1"/>
</dbReference>
<dbReference type="HAMAP" id="MF_00344">
    <property type="entry name" value="GMP_synthase"/>
    <property type="match status" value="1"/>
</dbReference>
<dbReference type="InterPro" id="IPR029062">
    <property type="entry name" value="Class_I_gatase-like"/>
</dbReference>
<dbReference type="InterPro" id="IPR017926">
    <property type="entry name" value="GATASE"/>
</dbReference>
<dbReference type="InterPro" id="IPR001674">
    <property type="entry name" value="GMP_synth_C"/>
</dbReference>
<dbReference type="InterPro" id="IPR004739">
    <property type="entry name" value="GMP_synth_GATase"/>
</dbReference>
<dbReference type="InterPro" id="IPR022955">
    <property type="entry name" value="GMP_synthase"/>
</dbReference>
<dbReference type="InterPro" id="IPR025777">
    <property type="entry name" value="GMPS_ATP_PPase_dom"/>
</dbReference>
<dbReference type="InterPro" id="IPR014729">
    <property type="entry name" value="Rossmann-like_a/b/a_fold"/>
</dbReference>
<dbReference type="NCBIfam" id="TIGR00884">
    <property type="entry name" value="guaA_Cterm"/>
    <property type="match status" value="1"/>
</dbReference>
<dbReference type="NCBIfam" id="TIGR00888">
    <property type="entry name" value="guaA_Nterm"/>
    <property type="match status" value="1"/>
</dbReference>
<dbReference type="NCBIfam" id="NF000848">
    <property type="entry name" value="PRK00074.1"/>
    <property type="match status" value="1"/>
</dbReference>
<dbReference type="PANTHER" id="PTHR11922:SF2">
    <property type="entry name" value="GMP SYNTHASE [GLUTAMINE-HYDROLYZING]"/>
    <property type="match status" value="1"/>
</dbReference>
<dbReference type="PANTHER" id="PTHR11922">
    <property type="entry name" value="GMP SYNTHASE-RELATED"/>
    <property type="match status" value="1"/>
</dbReference>
<dbReference type="Pfam" id="PF00117">
    <property type="entry name" value="GATase"/>
    <property type="match status" value="1"/>
</dbReference>
<dbReference type="Pfam" id="PF00958">
    <property type="entry name" value="GMP_synt_C"/>
    <property type="match status" value="1"/>
</dbReference>
<dbReference type="PRINTS" id="PR00097">
    <property type="entry name" value="ANTSNTHASEII"/>
</dbReference>
<dbReference type="PRINTS" id="PR00099">
    <property type="entry name" value="CPSGATASE"/>
</dbReference>
<dbReference type="PRINTS" id="PR00096">
    <property type="entry name" value="GATASE"/>
</dbReference>
<dbReference type="SUPFAM" id="SSF52402">
    <property type="entry name" value="Adenine nucleotide alpha hydrolases-like"/>
    <property type="match status" value="1"/>
</dbReference>
<dbReference type="SUPFAM" id="SSF52317">
    <property type="entry name" value="Class I glutamine amidotransferase-like"/>
    <property type="match status" value="1"/>
</dbReference>
<dbReference type="SUPFAM" id="SSF54810">
    <property type="entry name" value="GMP synthetase C-terminal dimerisation domain"/>
    <property type="match status" value="1"/>
</dbReference>
<dbReference type="PROSITE" id="PS51273">
    <property type="entry name" value="GATASE_TYPE_1"/>
    <property type="match status" value="1"/>
</dbReference>
<dbReference type="PROSITE" id="PS51553">
    <property type="entry name" value="GMPS_ATP_PPASE"/>
    <property type="match status" value="1"/>
</dbReference>
<keyword id="KW-0067">ATP-binding</keyword>
<keyword id="KW-0315">Glutamine amidotransferase</keyword>
<keyword id="KW-0332">GMP biosynthesis</keyword>
<keyword id="KW-0436">Ligase</keyword>
<keyword id="KW-0547">Nucleotide-binding</keyword>
<keyword id="KW-0658">Purine biosynthesis</keyword>
<keyword id="KW-1185">Reference proteome</keyword>